<organism>
    <name type="scientific">Ligilactobacillus salivarius (strain UCC118)</name>
    <name type="common">Lactobacillus salivarius</name>
    <dbReference type="NCBI Taxonomy" id="362948"/>
    <lineage>
        <taxon>Bacteria</taxon>
        <taxon>Bacillati</taxon>
        <taxon>Bacillota</taxon>
        <taxon>Bacilli</taxon>
        <taxon>Lactobacillales</taxon>
        <taxon>Lactobacillaceae</taxon>
        <taxon>Ligilactobacillus</taxon>
    </lineage>
</organism>
<feature type="chain" id="PRO_0000267049" description="Enolase">
    <location>
        <begin position="1"/>
        <end position="441"/>
    </location>
</feature>
<feature type="active site" description="Proton donor" evidence="1">
    <location>
        <position position="205"/>
    </location>
</feature>
<feature type="active site" description="Proton acceptor" evidence="1">
    <location>
        <position position="340"/>
    </location>
</feature>
<feature type="binding site" evidence="1">
    <location>
        <position position="163"/>
    </location>
    <ligand>
        <name>(2R)-2-phosphoglycerate</name>
        <dbReference type="ChEBI" id="CHEBI:58289"/>
    </ligand>
</feature>
<feature type="binding site" evidence="1">
    <location>
        <position position="242"/>
    </location>
    <ligand>
        <name>Mg(2+)</name>
        <dbReference type="ChEBI" id="CHEBI:18420"/>
    </ligand>
</feature>
<feature type="binding site" evidence="1">
    <location>
        <position position="288"/>
    </location>
    <ligand>
        <name>Mg(2+)</name>
        <dbReference type="ChEBI" id="CHEBI:18420"/>
    </ligand>
</feature>
<feature type="binding site" evidence="1">
    <location>
        <position position="315"/>
    </location>
    <ligand>
        <name>Mg(2+)</name>
        <dbReference type="ChEBI" id="CHEBI:18420"/>
    </ligand>
</feature>
<feature type="binding site" evidence="1">
    <location>
        <position position="340"/>
    </location>
    <ligand>
        <name>(2R)-2-phosphoglycerate</name>
        <dbReference type="ChEBI" id="CHEBI:58289"/>
    </ligand>
</feature>
<feature type="binding site" evidence="1">
    <location>
        <position position="369"/>
    </location>
    <ligand>
        <name>(2R)-2-phosphoglycerate</name>
        <dbReference type="ChEBI" id="CHEBI:58289"/>
    </ligand>
</feature>
<feature type="binding site" evidence="1">
    <location>
        <position position="370"/>
    </location>
    <ligand>
        <name>(2R)-2-phosphoglycerate</name>
        <dbReference type="ChEBI" id="CHEBI:58289"/>
    </ligand>
</feature>
<feature type="binding site" evidence="1">
    <location>
        <position position="391"/>
    </location>
    <ligand>
        <name>(2R)-2-phosphoglycerate</name>
        <dbReference type="ChEBI" id="CHEBI:58289"/>
    </ligand>
</feature>
<keyword id="KW-0963">Cytoplasm</keyword>
<keyword id="KW-0324">Glycolysis</keyword>
<keyword id="KW-0456">Lyase</keyword>
<keyword id="KW-0460">Magnesium</keyword>
<keyword id="KW-0479">Metal-binding</keyword>
<keyword id="KW-1185">Reference proteome</keyword>
<keyword id="KW-0964">Secreted</keyword>
<accession>Q1WSY0</accession>
<gene>
    <name evidence="1" type="primary">eno</name>
    <name type="ordered locus">LSL_1163</name>
</gene>
<comment type="function">
    <text evidence="1">Catalyzes the reversible conversion of 2-phosphoglycerate (2-PG) into phosphoenolpyruvate (PEP). It is essential for the degradation of carbohydrates via glycolysis.</text>
</comment>
<comment type="catalytic activity">
    <reaction evidence="1">
        <text>(2R)-2-phosphoglycerate = phosphoenolpyruvate + H2O</text>
        <dbReference type="Rhea" id="RHEA:10164"/>
        <dbReference type="ChEBI" id="CHEBI:15377"/>
        <dbReference type="ChEBI" id="CHEBI:58289"/>
        <dbReference type="ChEBI" id="CHEBI:58702"/>
        <dbReference type="EC" id="4.2.1.11"/>
    </reaction>
</comment>
<comment type="cofactor">
    <cofactor evidence="1">
        <name>Mg(2+)</name>
        <dbReference type="ChEBI" id="CHEBI:18420"/>
    </cofactor>
    <text evidence="1">Binds a second Mg(2+) ion via substrate during catalysis.</text>
</comment>
<comment type="pathway">
    <text evidence="1">Carbohydrate degradation; glycolysis; pyruvate from D-glyceraldehyde 3-phosphate: step 4/5.</text>
</comment>
<comment type="subcellular location">
    <subcellularLocation>
        <location evidence="1">Cytoplasm</location>
    </subcellularLocation>
    <subcellularLocation>
        <location evidence="1">Secreted</location>
    </subcellularLocation>
    <subcellularLocation>
        <location evidence="1">Cell surface</location>
    </subcellularLocation>
    <text evidence="1">Fractions of enolase are present in both the cytoplasm and on the cell surface.</text>
</comment>
<comment type="similarity">
    <text evidence="1">Belongs to the enolase family.</text>
</comment>
<dbReference type="EC" id="4.2.1.11" evidence="1"/>
<dbReference type="EMBL" id="CP000233">
    <property type="protein sequence ID" value="ABD99971.1"/>
    <property type="molecule type" value="Genomic_DNA"/>
</dbReference>
<dbReference type="RefSeq" id="WP_003700615.1">
    <property type="nucleotide sequence ID" value="NC_007929.1"/>
</dbReference>
<dbReference type="RefSeq" id="YP_536054.1">
    <property type="nucleotide sequence ID" value="NC_007929.1"/>
</dbReference>
<dbReference type="SMR" id="Q1WSY0"/>
<dbReference type="STRING" id="362948.LSL_1163"/>
<dbReference type="GeneID" id="89465909"/>
<dbReference type="KEGG" id="lsl:LSL_1163"/>
<dbReference type="PATRIC" id="fig|362948.14.peg.1237"/>
<dbReference type="HOGENOM" id="CLU_031223_2_1_9"/>
<dbReference type="OrthoDB" id="9804716at2"/>
<dbReference type="UniPathway" id="UPA00109">
    <property type="reaction ID" value="UER00187"/>
</dbReference>
<dbReference type="Proteomes" id="UP000006559">
    <property type="component" value="Chromosome"/>
</dbReference>
<dbReference type="GO" id="GO:0009986">
    <property type="term" value="C:cell surface"/>
    <property type="evidence" value="ECO:0007669"/>
    <property type="project" value="UniProtKB-SubCell"/>
</dbReference>
<dbReference type="GO" id="GO:0005576">
    <property type="term" value="C:extracellular region"/>
    <property type="evidence" value="ECO:0007669"/>
    <property type="project" value="UniProtKB-SubCell"/>
</dbReference>
<dbReference type="GO" id="GO:0000015">
    <property type="term" value="C:phosphopyruvate hydratase complex"/>
    <property type="evidence" value="ECO:0007669"/>
    <property type="project" value="InterPro"/>
</dbReference>
<dbReference type="GO" id="GO:0000287">
    <property type="term" value="F:magnesium ion binding"/>
    <property type="evidence" value="ECO:0007669"/>
    <property type="project" value="UniProtKB-UniRule"/>
</dbReference>
<dbReference type="GO" id="GO:0004634">
    <property type="term" value="F:phosphopyruvate hydratase activity"/>
    <property type="evidence" value="ECO:0007669"/>
    <property type="project" value="UniProtKB-UniRule"/>
</dbReference>
<dbReference type="GO" id="GO:0006096">
    <property type="term" value="P:glycolytic process"/>
    <property type="evidence" value="ECO:0007669"/>
    <property type="project" value="UniProtKB-UniRule"/>
</dbReference>
<dbReference type="CDD" id="cd03313">
    <property type="entry name" value="enolase"/>
    <property type="match status" value="1"/>
</dbReference>
<dbReference type="FunFam" id="3.20.20.120:FF:000001">
    <property type="entry name" value="Enolase"/>
    <property type="match status" value="1"/>
</dbReference>
<dbReference type="FunFam" id="3.30.390.10:FF:000001">
    <property type="entry name" value="Enolase"/>
    <property type="match status" value="1"/>
</dbReference>
<dbReference type="Gene3D" id="3.20.20.120">
    <property type="entry name" value="Enolase-like C-terminal domain"/>
    <property type="match status" value="1"/>
</dbReference>
<dbReference type="Gene3D" id="3.30.390.10">
    <property type="entry name" value="Enolase-like, N-terminal domain"/>
    <property type="match status" value="1"/>
</dbReference>
<dbReference type="HAMAP" id="MF_00318">
    <property type="entry name" value="Enolase"/>
    <property type="match status" value="1"/>
</dbReference>
<dbReference type="InterPro" id="IPR000941">
    <property type="entry name" value="Enolase"/>
</dbReference>
<dbReference type="InterPro" id="IPR036849">
    <property type="entry name" value="Enolase-like_C_sf"/>
</dbReference>
<dbReference type="InterPro" id="IPR029017">
    <property type="entry name" value="Enolase-like_N"/>
</dbReference>
<dbReference type="InterPro" id="IPR020810">
    <property type="entry name" value="Enolase_C"/>
</dbReference>
<dbReference type="InterPro" id="IPR020809">
    <property type="entry name" value="Enolase_CS"/>
</dbReference>
<dbReference type="InterPro" id="IPR020811">
    <property type="entry name" value="Enolase_N"/>
</dbReference>
<dbReference type="NCBIfam" id="TIGR01060">
    <property type="entry name" value="eno"/>
    <property type="match status" value="1"/>
</dbReference>
<dbReference type="PANTHER" id="PTHR11902">
    <property type="entry name" value="ENOLASE"/>
    <property type="match status" value="1"/>
</dbReference>
<dbReference type="PANTHER" id="PTHR11902:SF1">
    <property type="entry name" value="ENOLASE"/>
    <property type="match status" value="1"/>
</dbReference>
<dbReference type="Pfam" id="PF00113">
    <property type="entry name" value="Enolase_C"/>
    <property type="match status" value="1"/>
</dbReference>
<dbReference type="Pfam" id="PF03952">
    <property type="entry name" value="Enolase_N"/>
    <property type="match status" value="1"/>
</dbReference>
<dbReference type="PIRSF" id="PIRSF001400">
    <property type="entry name" value="Enolase"/>
    <property type="match status" value="1"/>
</dbReference>
<dbReference type="PRINTS" id="PR00148">
    <property type="entry name" value="ENOLASE"/>
</dbReference>
<dbReference type="SFLD" id="SFLDF00002">
    <property type="entry name" value="enolase"/>
    <property type="match status" value="1"/>
</dbReference>
<dbReference type="SFLD" id="SFLDG00178">
    <property type="entry name" value="enolase"/>
    <property type="match status" value="1"/>
</dbReference>
<dbReference type="SMART" id="SM01192">
    <property type="entry name" value="Enolase_C"/>
    <property type="match status" value="1"/>
</dbReference>
<dbReference type="SMART" id="SM01193">
    <property type="entry name" value="Enolase_N"/>
    <property type="match status" value="1"/>
</dbReference>
<dbReference type="SUPFAM" id="SSF51604">
    <property type="entry name" value="Enolase C-terminal domain-like"/>
    <property type="match status" value="1"/>
</dbReference>
<dbReference type="SUPFAM" id="SSF54826">
    <property type="entry name" value="Enolase N-terminal domain-like"/>
    <property type="match status" value="1"/>
</dbReference>
<dbReference type="PROSITE" id="PS00164">
    <property type="entry name" value="ENOLASE"/>
    <property type="match status" value="1"/>
</dbReference>
<evidence type="ECO:0000255" key="1">
    <source>
        <dbReference type="HAMAP-Rule" id="MF_00318"/>
    </source>
</evidence>
<sequence>MSAITEIYAREVLDSRGNPTVEAEVYTQDGGFGRGIVPSGASTGEHEAVELRDGDKDRYMGKGVTKAVANVNDIIAKEIVGYEVTDQVAIDKAMIALDGTPNKGKLGANAILAVSIAVARAAADELQVPLYNYIGGFNAHVLPTPMMNVINGGAHSDNKVDFQEFMIMPVGAPTVKEAIRMGSETFHHLQKLLAADGKVTSVGDEGGFAPDFANNEEPLEYLIKAIEAAGYKPGKDIAIAVDVASSELWDNDSKKYKLRWSTGEEFTTEEFIKYLEGLVAKYPIISIEDPIDENNWDDWVTITSELGKKVQLVGDDFFVTNTEYLRKGIKMGAANSILIKVNQIGTLTETMEAIEMAKEAGYTAIVSHRSGETEDTTIADLVVATNAGQIKTGSMSRTDRLAKYNQLMRIEDQLTDLVAKYKGINSFYNLSEQARQDIINK</sequence>
<proteinExistence type="inferred from homology"/>
<name>ENO_LIGS1</name>
<protein>
    <recommendedName>
        <fullName evidence="1">Enolase</fullName>
        <ecNumber evidence="1">4.2.1.11</ecNumber>
    </recommendedName>
    <alternativeName>
        <fullName evidence="1">2-phospho-D-glycerate hydro-lyase</fullName>
    </alternativeName>
    <alternativeName>
        <fullName evidence="1">2-phosphoglycerate dehydratase</fullName>
    </alternativeName>
</protein>
<reference key="1">
    <citation type="journal article" date="2006" name="Proc. Natl. Acad. Sci. U.S.A.">
        <title>Multireplicon genome architecture of Lactobacillus salivarius.</title>
        <authorList>
            <person name="Claesson M.J."/>
            <person name="Li Y."/>
            <person name="Leahy S."/>
            <person name="Canchaya C."/>
            <person name="van Pijkeren J.P."/>
            <person name="Cerdeno-Tarraga A.M."/>
            <person name="Parkhill J."/>
            <person name="Flynn S."/>
            <person name="O'Sullivan G.C."/>
            <person name="Collins J.K."/>
            <person name="Higgins D."/>
            <person name="Shanahan F."/>
            <person name="Fitzgerald G.F."/>
            <person name="van Sinderen D."/>
            <person name="O'Toole P.W."/>
        </authorList>
    </citation>
    <scope>NUCLEOTIDE SEQUENCE [LARGE SCALE GENOMIC DNA]</scope>
    <source>
        <strain>UCC118</strain>
    </source>
</reference>